<gene>
    <name type="primary">TVP23C</name>
    <name type="synonym">FAM18B2</name>
    <name type="ORF">Nbla10383</name>
</gene>
<evidence type="ECO:0000255" key="1"/>
<evidence type="ECO:0000256" key="2">
    <source>
        <dbReference type="SAM" id="MobiDB-lite"/>
    </source>
</evidence>
<evidence type="ECO:0000269" key="3">
    <source>
    </source>
</evidence>
<evidence type="ECO:0000303" key="4">
    <source>
    </source>
</evidence>
<evidence type="ECO:0000303" key="5">
    <source>
    </source>
</evidence>
<evidence type="ECO:0000305" key="6"/>
<evidence type="ECO:0007744" key="7">
    <source>
    </source>
</evidence>
<accession>Q96ET8</accession>
<accession>Q3LIC7</accession>
<proteinExistence type="evidence at protein level"/>
<organism>
    <name type="scientific">Homo sapiens</name>
    <name type="common">Human</name>
    <dbReference type="NCBI Taxonomy" id="9606"/>
    <lineage>
        <taxon>Eukaryota</taxon>
        <taxon>Metazoa</taxon>
        <taxon>Chordata</taxon>
        <taxon>Craniata</taxon>
        <taxon>Vertebrata</taxon>
        <taxon>Euteleostomi</taxon>
        <taxon>Mammalia</taxon>
        <taxon>Eutheria</taxon>
        <taxon>Euarchontoglires</taxon>
        <taxon>Primates</taxon>
        <taxon>Haplorrhini</taxon>
        <taxon>Catarrhini</taxon>
        <taxon>Hominidae</taxon>
        <taxon>Homo</taxon>
    </lineage>
</organism>
<protein>
    <recommendedName>
        <fullName>Golgi apparatus membrane protein TVP23 homolog C</fullName>
    </recommendedName>
</protein>
<feature type="chain" id="PRO_0000212831" description="Golgi apparatus membrane protein TVP23 homolog C">
    <location>
        <begin position="1"/>
        <end position="276"/>
    </location>
</feature>
<feature type="transmembrane region" description="Helical" evidence="1">
    <location>
        <begin position="52"/>
        <end position="72"/>
    </location>
</feature>
<feature type="transmembrane region" description="Helical" evidence="1">
    <location>
        <begin position="126"/>
        <end position="146"/>
    </location>
</feature>
<feature type="region of interest" description="Disordered" evidence="2">
    <location>
        <begin position="1"/>
        <end position="21"/>
    </location>
</feature>
<feature type="region of interest" description="Disordered" evidence="2">
    <location>
        <begin position="254"/>
        <end position="276"/>
    </location>
</feature>
<feature type="modified residue" description="N-acetylmethionine" evidence="7">
    <location>
        <position position="1"/>
    </location>
</feature>
<feature type="splice variant" id="VSP_040556" description="In isoform 3." evidence="5">
    <original>RRSRHIAQTGLKVLGSRDPPASAFQSAGITGVSRCPGHPSRKFHQVDIN</original>
    <variation>AVVIMGVVLQGANLYGYIRCKVRSRKHLTSMATSYFGKQFLRQVSVFWM</variation>
    <location>
        <begin position="155"/>
        <end position="203"/>
    </location>
</feature>
<feature type="splice variant" id="VSP_017019" description="In isoform 2." evidence="4">
    <original>RRSRHIAQTG</original>
    <variation>ESEPVMLRNQ</variation>
    <location>
        <begin position="155"/>
        <end position="164"/>
    </location>
</feature>
<feature type="splice variant" id="VSP_017020" description="In isoform 2." evidence="4">
    <location>
        <begin position="165"/>
        <end position="276"/>
    </location>
</feature>
<feature type="splice variant" id="VSP_040557" description="In isoform 3." evidence="5">
    <location>
        <begin position="204"/>
        <end position="276"/>
    </location>
</feature>
<feature type="sequence variant" id="VAR_024929" description="In dbSNP:rs17850828." evidence="3">
    <original>D</original>
    <variation>A</variation>
    <location>
        <position position="12"/>
    </location>
</feature>
<feature type="sequence variant" id="VAR_055797" description="In dbSNP:rs12150518.">
    <original>L</original>
    <variation>Q</variation>
    <location>
        <position position="271"/>
    </location>
</feature>
<feature type="sequence conflict" description="In Ref. 1; BAE45741." evidence="6" ref="1">
    <original>S</original>
    <variation>G</variation>
    <location>
        <position position="102"/>
    </location>
</feature>
<feature type="sequence conflict" description="In Ref. 4; AAH11952." evidence="6" ref="4">
    <original>R</original>
    <variation>S</variation>
    <location>
        <position position="195"/>
    </location>
</feature>
<feature type="sequence conflict" description="In Ref. 2; AK310363." evidence="6" ref="2">
    <original>S</original>
    <variation>T</variation>
    <location sequence="Q96ET8-3">
        <position position="199"/>
    </location>
</feature>
<feature type="sequence conflict" description="In Ref. 2; AK310363." evidence="6" ref="2">
    <original>W</original>
    <variation>R</variation>
    <location sequence="Q96ET8-3">
        <position position="202"/>
    </location>
</feature>
<keyword id="KW-0007">Acetylation</keyword>
<keyword id="KW-0025">Alternative splicing</keyword>
<keyword id="KW-0472">Membrane</keyword>
<keyword id="KW-1185">Reference proteome</keyword>
<keyword id="KW-0812">Transmembrane</keyword>
<keyword id="KW-1133">Transmembrane helix</keyword>
<name>TV23C_HUMAN</name>
<reference key="1">
    <citation type="journal article" date="2003" name="Cancer Lett.">
        <title>Neuroblastoma oligo-capping cDNA project: toward the understanding of the genesis and biology of neuroblastoma.</title>
        <authorList>
            <person name="Ohira M."/>
            <person name="Morohashi A."/>
            <person name="Nakamura Y."/>
            <person name="Isogai E."/>
            <person name="Furuya K."/>
            <person name="Hamano S."/>
            <person name="Machida T."/>
            <person name="Aoyama M."/>
            <person name="Fukumura M."/>
            <person name="Miyazaki K."/>
            <person name="Suzuki Y."/>
            <person name="Sugano S."/>
            <person name="Hirato J."/>
            <person name="Nakagawara A."/>
        </authorList>
    </citation>
    <scope>NUCLEOTIDE SEQUENCE [LARGE SCALE MRNA] (ISOFORM 2)</scope>
    <source>
        <tissue>Neuroblastoma</tissue>
    </source>
</reference>
<reference key="2">
    <citation type="journal article" date="2004" name="Nat. Genet.">
        <title>Complete sequencing and characterization of 21,243 full-length human cDNAs.</title>
        <authorList>
            <person name="Ota T."/>
            <person name="Suzuki Y."/>
            <person name="Nishikawa T."/>
            <person name="Otsuki T."/>
            <person name="Sugiyama T."/>
            <person name="Irie R."/>
            <person name="Wakamatsu A."/>
            <person name="Hayashi K."/>
            <person name="Sato H."/>
            <person name="Nagai K."/>
            <person name="Kimura K."/>
            <person name="Makita H."/>
            <person name="Sekine M."/>
            <person name="Obayashi M."/>
            <person name="Nishi T."/>
            <person name="Shibahara T."/>
            <person name="Tanaka T."/>
            <person name="Ishii S."/>
            <person name="Yamamoto J."/>
            <person name="Saito K."/>
            <person name="Kawai Y."/>
            <person name="Isono Y."/>
            <person name="Nakamura Y."/>
            <person name="Nagahari K."/>
            <person name="Murakami K."/>
            <person name="Yasuda T."/>
            <person name="Iwayanagi T."/>
            <person name="Wagatsuma M."/>
            <person name="Shiratori A."/>
            <person name="Sudo H."/>
            <person name="Hosoiri T."/>
            <person name="Kaku Y."/>
            <person name="Kodaira H."/>
            <person name="Kondo H."/>
            <person name="Sugawara M."/>
            <person name="Takahashi M."/>
            <person name="Kanda K."/>
            <person name="Yokoi T."/>
            <person name="Furuya T."/>
            <person name="Kikkawa E."/>
            <person name="Omura Y."/>
            <person name="Abe K."/>
            <person name="Kamihara K."/>
            <person name="Katsuta N."/>
            <person name="Sato K."/>
            <person name="Tanikawa M."/>
            <person name="Yamazaki M."/>
            <person name="Ninomiya K."/>
            <person name="Ishibashi T."/>
            <person name="Yamashita H."/>
            <person name="Murakawa K."/>
            <person name="Fujimori K."/>
            <person name="Tanai H."/>
            <person name="Kimata M."/>
            <person name="Watanabe M."/>
            <person name="Hiraoka S."/>
            <person name="Chiba Y."/>
            <person name="Ishida S."/>
            <person name="Ono Y."/>
            <person name="Takiguchi S."/>
            <person name="Watanabe S."/>
            <person name="Yosida M."/>
            <person name="Hotuta T."/>
            <person name="Kusano J."/>
            <person name="Kanehori K."/>
            <person name="Takahashi-Fujii A."/>
            <person name="Hara H."/>
            <person name="Tanase T.-O."/>
            <person name="Nomura Y."/>
            <person name="Togiya S."/>
            <person name="Komai F."/>
            <person name="Hara R."/>
            <person name="Takeuchi K."/>
            <person name="Arita M."/>
            <person name="Imose N."/>
            <person name="Musashino K."/>
            <person name="Yuuki H."/>
            <person name="Oshima A."/>
            <person name="Sasaki N."/>
            <person name="Aotsuka S."/>
            <person name="Yoshikawa Y."/>
            <person name="Matsunawa H."/>
            <person name="Ichihara T."/>
            <person name="Shiohata N."/>
            <person name="Sano S."/>
            <person name="Moriya S."/>
            <person name="Momiyama H."/>
            <person name="Satoh N."/>
            <person name="Takami S."/>
            <person name="Terashima Y."/>
            <person name="Suzuki O."/>
            <person name="Nakagawa S."/>
            <person name="Senoh A."/>
            <person name="Mizoguchi H."/>
            <person name="Goto Y."/>
            <person name="Shimizu F."/>
            <person name="Wakebe H."/>
            <person name="Hishigaki H."/>
            <person name="Watanabe T."/>
            <person name="Sugiyama A."/>
            <person name="Takemoto M."/>
            <person name="Kawakami B."/>
            <person name="Yamazaki M."/>
            <person name="Watanabe K."/>
            <person name="Kumagai A."/>
            <person name="Itakura S."/>
            <person name="Fukuzumi Y."/>
            <person name="Fujimori Y."/>
            <person name="Komiyama M."/>
            <person name="Tashiro H."/>
            <person name="Tanigami A."/>
            <person name="Fujiwara T."/>
            <person name="Ono T."/>
            <person name="Yamada K."/>
            <person name="Fujii Y."/>
            <person name="Ozaki K."/>
            <person name="Hirao M."/>
            <person name="Ohmori Y."/>
            <person name="Kawabata A."/>
            <person name="Hikiji T."/>
            <person name="Kobatake N."/>
            <person name="Inagaki H."/>
            <person name="Ikema Y."/>
            <person name="Okamoto S."/>
            <person name="Okitani R."/>
            <person name="Kawakami T."/>
            <person name="Noguchi S."/>
            <person name="Itoh T."/>
            <person name="Shigeta K."/>
            <person name="Senba T."/>
            <person name="Matsumura K."/>
            <person name="Nakajima Y."/>
            <person name="Mizuno T."/>
            <person name="Morinaga M."/>
            <person name="Sasaki M."/>
            <person name="Togashi T."/>
            <person name="Oyama M."/>
            <person name="Hata H."/>
            <person name="Watanabe M."/>
            <person name="Komatsu T."/>
            <person name="Mizushima-Sugano J."/>
            <person name="Satoh T."/>
            <person name="Shirai Y."/>
            <person name="Takahashi Y."/>
            <person name="Nakagawa K."/>
            <person name="Okumura K."/>
            <person name="Nagase T."/>
            <person name="Nomura N."/>
            <person name="Kikuchi H."/>
            <person name="Masuho Y."/>
            <person name="Yamashita R."/>
            <person name="Nakai K."/>
            <person name="Yada T."/>
            <person name="Nakamura Y."/>
            <person name="Ohara O."/>
            <person name="Isogai T."/>
            <person name="Sugano S."/>
        </authorList>
    </citation>
    <scope>NUCLEOTIDE SEQUENCE [LARGE SCALE MRNA] (ISOFORM 3)</scope>
    <source>
        <tissue>Testis</tissue>
    </source>
</reference>
<reference key="3">
    <citation type="journal article" date="2006" name="Nature">
        <title>DNA sequence of human chromosome 17 and analysis of rearrangement in the human lineage.</title>
        <authorList>
            <person name="Zody M.C."/>
            <person name="Garber M."/>
            <person name="Adams D.J."/>
            <person name="Sharpe T."/>
            <person name="Harrow J."/>
            <person name="Lupski J.R."/>
            <person name="Nicholson C."/>
            <person name="Searle S.M."/>
            <person name="Wilming L."/>
            <person name="Young S.K."/>
            <person name="Abouelleil A."/>
            <person name="Allen N.R."/>
            <person name="Bi W."/>
            <person name="Bloom T."/>
            <person name="Borowsky M.L."/>
            <person name="Bugalter B.E."/>
            <person name="Butler J."/>
            <person name="Chang J.L."/>
            <person name="Chen C.-K."/>
            <person name="Cook A."/>
            <person name="Corum B."/>
            <person name="Cuomo C.A."/>
            <person name="de Jong P.J."/>
            <person name="DeCaprio D."/>
            <person name="Dewar K."/>
            <person name="FitzGerald M."/>
            <person name="Gilbert J."/>
            <person name="Gibson R."/>
            <person name="Gnerre S."/>
            <person name="Goldstein S."/>
            <person name="Grafham D.V."/>
            <person name="Grocock R."/>
            <person name="Hafez N."/>
            <person name="Hagopian D.S."/>
            <person name="Hart E."/>
            <person name="Norman C.H."/>
            <person name="Humphray S."/>
            <person name="Jaffe D.B."/>
            <person name="Jones M."/>
            <person name="Kamal M."/>
            <person name="Khodiyar V.K."/>
            <person name="LaButti K."/>
            <person name="Laird G."/>
            <person name="Lehoczky J."/>
            <person name="Liu X."/>
            <person name="Lokyitsang T."/>
            <person name="Loveland J."/>
            <person name="Lui A."/>
            <person name="Macdonald P."/>
            <person name="Major J.E."/>
            <person name="Matthews L."/>
            <person name="Mauceli E."/>
            <person name="McCarroll S.A."/>
            <person name="Mihalev A.H."/>
            <person name="Mudge J."/>
            <person name="Nguyen C."/>
            <person name="Nicol R."/>
            <person name="O'Leary S.B."/>
            <person name="Osoegawa K."/>
            <person name="Schwartz D.C."/>
            <person name="Shaw-Smith C."/>
            <person name="Stankiewicz P."/>
            <person name="Steward C."/>
            <person name="Swarbreck D."/>
            <person name="Venkataraman V."/>
            <person name="Whittaker C.A."/>
            <person name="Yang X."/>
            <person name="Zimmer A.R."/>
            <person name="Bradley A."/>
            <person name="Hubbard T."/>
            <person name="Birren B.W."/>
            <person name="Rogers J."/>
            <person name="Lander E.S."/>
            <person name="Nusbaum C."/>
        </authorList>
    </citation>
    <scope>NUCLEOTIDE SEQUENCE [LARGE SCALE GENOMIC DNA]</scope>
</reference>
<reference key="4">
    <citation type="journal article" date="2004" name="Genome Res.">
        <title>The status, quality, and expansion of the NIH full-length cDNA project: the Mammalian Gene Collection (MGC).</title>
        <authorList>
            <consortium name="The MGC Project Team"/>
        </authorList>
    </citation>
    <scope>NUCLEOTIDE SEQUENCE [LARGE SCALE MRNA] (ISOFORM 1)</scope>
    <scope>VARIANT ALA-12</scope>
    <source>
        <tissue>Ovary</tissue>
    </source>
</reference>
<reference key="5">
    <citation type="journal article" date="2009" name="Anal. Chem.">
        <title>Lys-N and trypsin cover complementary parts of the phosphoproteome in a refined SCX-based approach.</title>
        <authorList>
            <person name="Gauci S."/>
            <person name="Helbig A.O."/>
            <person name="Slijper M."/>
            <person name="Krijgsveld J."/>
            <person name="Heck A.J."/>
            <person name="Mohammed S."/>
        </authorList>
    </citation>
    <scope>ACETYLATION [LARGE SCALE ANALYSIS] AT MET-1</scope>
    <scope>IDENTIFICATION BY MASS SPECTROMETRY [LARGE SCALE ANALYSIS]</scope>
</reference>
<dbReference type="EMBL" id="AB074181">
    <property type="protein sequence ID" value="BAE45741.1"/>
    <property type="molecule type" value="mRNA"/>
</dbReference>
<dbReference type="EMBL" id="AK310363">
    <property type="status" value="NOT_ANNOTATED_CDS"/>
    <property type="molecule type" value="mRNA"/>
</dbReference>
<dbReference type="EMBL" id="AC005517">
    <property type="status" value="NOT_ANNOTATED_CDS"/>
    <property type="molecule type" value="Genomic_DNA"/>
</dbReference>
<dbReference type="EMBL" id="AC005838">
    <property type="status" value="NOT_ANNOTATED_CDS"/>
    <property type="molecule type" value="Genomic_DNA"/>
</dbReference>
<dbReference type="EMBL" id="BC011952">
    <property type="protein sequence ID" value="AAH11952.1"/>
    <property type="molecule type" value="mRNA"/>
</dbReference>
<dbReference type="CCDS" id="CCDS11170.1">
    <molecule id="Q96ET8-1"/>
</dbReference>
<dbReference type="CCDS" id="CCDS45617.1">
    <molecule id="Q96ET8-3"/>
</dbReference>
<dbReference type="RefSeq" id="NP_001128508.1">
    <molecule id="Q96ET8-3"/>
    <property type="nucleotide sequence ID" value="NM_001135036.2"/>
</dbReference>
<dbReference type="RefSeq" id="NP_001191407.1">
    <molecule id="Q96ET8-2"/>
    <property type="nucleotide sequence ID" value="NM_001204478.1"/>
</dbReference>
<dbReference type="RefSeq" id="NP_660344.2">
    <molecule id="Q96ET8-1"/>
    <property type="nucleotide sequence ID" value="NM_145301.3"/>
</dbReference>
<dbReference type="BioGRID" id="128364">
    <property type="interactions" value="63"/>
</dbReference>
<dbReference type="BioGRID" id="1529434">
    <property type="interactions" value="1"/>
</dbReference>
<dbReference type="FunCoup" id="Q96ET8">
    <property type="interactions" value="491"/>
</dbReference>
<dbReference type="IntAct" id="Q96ET8">
    <property type="interactions" value="54"/>
</dbReference>
<dbReference type="STRING" id="9606.ENSP00000225576"/>
<dbReference type="GlyGen" id="Q96ET8">
    <property type="glycosylation" value="1 site, 1 O-linked glycan (1 site)"/>
</dbReference>
<dbReference type="iPTMnet" id="Q96ET8"/>
<dbReference type="PhosphoSitePlus" id="Q96ET8"/>
<dbReference type="BioMuta" id="TVP23C"/>
<dbReference type="DMDM" id="296439352"/>
<dbReference type="jPOST" id="Q96ET8"/>
<dbReference type="MassIVE" id="Q96ET8"/>
<dbReference type="PaxDb" id="9606-ENSP00000225576"/>
<dbReference type="PeptideAtlas" id="Q96ET8"/>
<dbReference type="ProteomicsDB" id="76447">
    <molecule id="Q96ET8-1"/>
</dbReference>
<dbReference type="ProteomicsDB" id="76448">
    <molecule id="Q96ET8-2"/>
</dbReference>
<dbReference type="ProteomicsDB" id="76449">
    <molecule id="Q96ET8-3"/>
</dbReference>
<dbReference type="Pumba" id="Q96ET8"/>
<dbReference type="Antibodypedia" id="13138">
    <property type="antibodies" value="34 antibodies from 13 providers"/>
</dbReference>
<dbReference type="DNASU" id="100533496"/>
<dbReference type="Ensembl" id="ENST00000225576.7">
    <molecule id="Q96ET8-1"/>
    <property type="protein sequence ID" value="ENSP00000225576.3"/>
    <property type="gene ID" value="ENSG00000175106.17"/>
</dbReference>
<dbReference type="Ensembl" id="ENST00000518321.6">
    <molecule id="Q96ET8-3"/>
    <property type="protein sequence ID" value="ENSP00000464052.1"/>
    <property type="gene ID" value="ENSG00000175106.17"/>
</dbReference>
<dbReference type="GeneID" id="100533496"/>
<dbReference type="GeneID" id="201158"/>
<dbReference type="KEGG" id="hsa:100533496"/>
<dbReference type="KEGG" id="hsa:201158"/>
<dbReference type="MANE-Select" id="ENST00000518321.6">
    <molecule id="Q96ET8-3"/>
    <property type="protein sequence ID" value="ENSP00000464052.1"/>
    <property type="RefSeq nucleotide sequence ID" value="NM_001135036.2"/>
    <property type="RefSeq protein sequence ID" value="NP_001128508.1"/>
</dbReference>
<dbReference type="UCSC" id="uc002goq.3">
    <molecule id="Q96ET8-1"/>
    <property type="organism name" value="human"/>
</dbReference>
<dbReference type="AGR" id="HGNC:30453"/>
<dbReference type="AGR" id="HGNC:42961"/>
<dbReference type="CTD" id="100533496"/>
<dbReference type="CTD" id="201158"/>
<dbReference type="GeneCards" id="TVP23C"/>
<dbReference type="HGNC" id="HGNC:30453">
    <property type="gene designation" value="TVP23C"/>
</dbReference>
<dbReference type="HPA" id="ENSG00000175106">
    <property type="expression patterns" value="Low tissue specificity"/>
</dbReference>
<dbReference type="neXtProt" id="NX_Q96ET8"/>
<dbReference type="OpenTargets" id="ENSG00000175106"/>
<dbReference type="OpenTargets" id="ENSG00000259024"/>
<dbReference type="PharmGKB" id="PA142671894"/>
<dbReference type="VEuPathDB" id="HostDB:ENSG00000175106"/>
<dbReference type="eggNOG" id="KOG3195">
    <property type="taxonomic scope" value="Eukaryota"/>
</dbReference>
<dbReference type="GeneTree" id="ENSGT00390000004428"/>
<dbReference type="HOGENOM" id="CLU_074845_4_0_1"/>
<dbReference type="InParanoid" id="Q96ET8"/>
<dbReference type="OMA" id="EWIYESQ"/>
<dbReference type="OrthoDB" id="2151161at2759"/>
<dbReference type="PAN-GO" id="Q96ET8">
    <property type="GO annotations" value="3 GO annotations based on evolutionary models"/>
</dbReference>
<dbReference type="PhylomeDB" id="Q96ET8"/>
<dbReference type="TreeFam" id="TF312906"/>
<dbReference type="PathwayCommons" id="Q96ET8"/>
<dbReference type="SignaLink" id="Q96ET8"/>
<dbReference type="BioGRID-ORCS" id="100533496">
    <property type="hits" value="55 hits in 588 CRISPR screens"/>
</dbReference>
<dbReference type="BioGRID-ORCS" id="201158">
    <property type="hits" value="119 hits in 1054 CRISPR screens"/>
</dbReference>
<dbReference type="Pharos" id="Q96ET8">
    <property type="development level" value="Tdark"/>
</dbReference>
<dbReference type="PRO" id="PR:Q96ET8"/>
<dbReference type="Proteomes" id="UP000005640">
    <property type="component" value="Chromosome 17"/>
</dbReference>
<dbReference type="RNAct" id="Q96ET8">
    <property type="molecule type" value="protein"/>
</dbReference>
<dbReference type="Bgee" id="ENSG00000175106">
    <property type="expression patterns" value="Expressed in sural nerve and 105 other cell types or tissues"/>
</dbReference>
<dbReference type="ExpressionAtlas" id="Q96ET8">
    <property type="expression patterns" value="baseline and differential"/>
</dbReference>
<dbReference type="GO" id="GO:0000139">
    <property type="term" value="C:Golgi membrane"/>
    <property type="evidence" value="ECO:0000318"/>
    <property type="project" value="GO_Central"/>
</dbReference>
<dbReference type="GO" id="GO:0009306">
    <property type="term" value="P:protein secretion"/>
    <property type="evidence" value="ECO:0000318"/>
    <property type="project" value="GO_Central"/>
</dbReference>
<dbReference type="GO" id="GO:0016192">
    <property type="term" value="P:vesicle-mediated transport"/>
    <property type="evidence" value="ECO:0000318"/>
    <property type="project" value="GO_Central"/>
</dbReference>
<dbReference type="InterPro" id="IPR008564">
    <property type="entry name" value="TVP23-like"/>
</dbReference>
<dbReference type="PANTHER" id="PTHR13019">
    <property type="entry name" value="GOLGI APPARATUS MEMBRANE PROTEIN TVP23"/>
    <property type="match status" value="1"/>
</dbReference>
<dbReference type="PANTHER" id="PTHR13019:SF23">
    <property type="entry name" value="GOLGI APPARATUS MEMBRANE PROTEIN TVP23 HOMOLOG C"/>
    <property type="match status" value="1"/>
</dbReference>
<dbReference type="Pfam" id="PF05832">
    <property type="entry name" value="DUF846"/>
    <property type="match status" value="1"/>
</dbReference>
<dbReference type="PRINTS" id="PR02045">
    <property type="entry name" value="F138DOMAIN"/>
</dbReference>
<sequence>MLQQDSNDDTEDVSLFDAEEETTNRPRKAKIRHPVASFFHLFFRVSAIIVCLLCELLSSSFITCMVTIILLLSCDFWAVKNVTGRLMVGLRWWNHIDEDGKSHWVFESRKESSQENKTVSEAESRIFWLGLIACSVLWVIFAFSALFSFTVKWLRRSRHIAQTGLKVLGSRDPPASAFQSAGITGVSRCPGHPSRKFHQVDINSFTRITDRALYWKPAPRLSSPPLRAAPGNCQQMAPARLFLSLRLWAWRGGGESPNSRGTGEPGPKFHLASGMH</sequence>
<comment type="subcellular location">
    <subcellularLocation>
        <location evidence="6">Membrane</location>
        <topology evidence="6">Multi-pass membrane protein</topology>
    </subcellularLocation>
</comment>
<comment type="alternative products">
    <event type="alternative splicing"/>
    <isoform>
        <id>Q96ET8-1</id>
        <name>1</name>
        <sequence type="displayed"/>
    </isoform>
    <isoform>
        <id>Q96ET8-2</id>
        <name>2</name>
        <sequence type="described" ref="VSP_017019 VSP_017020"/>
    </isoform>
    <isoform>
        <id>Q96ET8-3</id>
        <name>3</name>
        <sequence type="described" ref="VSP_040556 VSP_040557"/>
    </isoform>
</comment>
<comment type="similarity">
    <text evidence="6">Belongs to the TVP23 family.</text>
</comment>